<name>RL34_GEOKA</name>
<accession>Q5KU53</accession>
<feature type="chain" id="PRO_0000187386" description="Large ribosomal subunit protein bL34">
    <location>
        <begin position="1"/>
        <end position="44"/>
    </location>
</feature>
<feature type="region of interest" description="Disordered" evidence="2">
    <location>
        <begin position="1"/>
        <end position="44"/>
    </location>
</feature>
<feature type="compositionally biased region" description="Basic residues" evidence="2">
    <location>
        <begin position="1"/>
        <end position="19"/>
    </location>
</feature>
<feature type="compositionally biased region" description="Basic residues" evidence="2">
    <location>
        <begin position="26"/>
        <end position="44"/>
    </location>
</feature>
<gene>
    <name evidence="1" type="primary">rpmH</name>
    <name type="ordered locus">GK3498</name>
</gene>
<dbReference type="EMBL" id="BA000043">
    <property type="protein sequence ID" value="BAD77783.1"/>
    <property type="molecule type" value="Genomic_DNA"/>
</dbReference>
<dbReference type="RefSeq" id="WP_003253900.1">
    <property type="nucleotide sequence ID" value="NC_006510.1"/>
</dbReference>
<dbReference type="SMR" id="Q5KU53"/>
<dbReference type="STRING" id="235909.GK3498"/>
<dbReference type="GeneID" id="56924458"/>
<dbReference type="KEGG" id="gka:GK3498"/>
<dbReference type="eggNOG" id="COG0230">
    <property type="taxonomic scope" value="Bacteria"/>
</dbReference>
<dbReference type="HOGENOM" id="CLU_129938_2_0_9"/>
<dbReference type="Proteomes" id="UP000001172">
    <property type="component" value="Chromosome"/>
</dbReference>
<dbReference type="GO" id="GO:1990904">
    <property type="term" value="C:ribonucleoprotein complex"/>
    <property type="evidence" value="ECO:0007669"/>
    <property type="project" value="UniProtKB-KW"/>
</dbReference>
<dbReference type="GO" id="GO:0005840">
    <property type="term" value="C:ribosome"/>
    <property type="evidence" value="ECO:0007669"/>
    <property type="project" value="UniProtKB-KW"/>
</dbReference>
<dbReference type="GO" id="GO:0003735">
    <property type="term" value="F:structural constituent of ribosome"/>
    <property type="evidence" value="ECO:0007669"/>
    <property type="project" value="InterPro"/>
</dbReference>
<dbReference type="GO" id="GO:0006412">
    <property type="term" value="P:translation"/>
    <property type="evidence" value="ECO:0007669"/>
    <property type="project" value="UniProtKB-UniRule"/>
</dbReference>
<dbReference type="FunFam" id="1.10.287.3980:FF:000001">
    <property type="entry name" value="Mitochondrial ribosomal protein L34"/>
    <property type="match status" value="1"/>
</dbReference>
<dbReference type="Gene3D" id="1.10.287.3980">
    <property type="match status" value="1"/>
</dbReference>
<dbReference type="HAMAP" id="MF_00391">
    <property type="entry name" value="Ribosomal_bL34"/>
    <property type="match status" value="1"/>
</dbReference>
<dbReference type="InterPro" id="IPR000271">
    <property type="entry name" value="Ribosomal_bL34"/>
</dbReference>
<dbReference type="InterPro" id="IPR020939">
    <property type="entry name" value="Ribosomal_bL34_CS"/>
</dbReference>
<dbReference type="NCBIfam" id="TIGR01030">
    <property type="entry name" value="rpmH_bact"/>
    <property type="match status" value="1"/>
</dbReference>
<dbReference type="PANTHER" id="PTHR14503:SF4">
    <property type="entry name" value="LARGE RIBOSOMAL SUBUNIT PROTEIN BL34M"/>
    <property type="match status" value="1"/>
</dbReference>
<dbReference type="PANTHER" id="PTHR14503">
    <property type="entry name" value="MITOCHONDRIAL RIBOSOMAL PROTEIN 34 FAMILY MEMBER"/>
    <property type="match status" value="1"/>
</dbReference>
<dbReference type="Pfam" id="PF00468">
    <property type="entry name" value="Ribosomal_L34"/>
    <property type="match status" value="1"/>
</dbReference>
<dbReference type="PROSITE" id="PS00784">
    <property type="entry name" value="RIBOSOMAL_L34"/>
    <property type="match status" value="1"/>
</dbReference>
<organism>
    <name type="scientific">Geobacillus kaustophilus (strain HTA426)</name>
    <dbReference type="NCBI Taxonomy" id="235909"/>
    <lineage>
        <taxon>Bacteria</taxon>
        <taxon>Bacillati</taxon>
        <taxon>Bacillota</taxon>
        <taxon>Bacilli</taxon>
        <taxon>Bacillales</taxon>
        <taxon>Anoxybacillaceae</taxon>
        <taxon>Geobacillus</taxon>
        <taxon>Geobacillus thermoleovorans group</taxon>
    </lineage>
</organism>
<reference key="1">
    <citation type="journal article" date="2004" name="Nucleic Acids Res.">
        <title>Thermoadaptation trait revealed by the genome sequence of thermophilic Geobacillus kaustophilus.</title>
        <authorList>
            <person name="Takami H."/>
            <person name="Takaki Y."/>
            <person name="Chee G.-J."/>
            <person name="Nishi S."/>
            <person name="Shimamura S."/>
            <person name="Suzuki H."/>
            <person name="Matsui S."/>
            <person name="Uchiyama I."/>
        </authorList>
    </citation>
    <scope>NUCLEOTIDE SEQUENCE [LARGE SCALE GENOMIC DNA]</scope>
    <source>
        <strain>HTA426</strain>
    </source>
</reference>
<comment type="similarity">
    <text evidence="1">Belongs to the bacterial ribosomal protein bL34 family.</text>
</comment>
<proteinExistence type="inferred from homology"/>
<evidence type="ECO:0000255" key="1">
    <source>
        <dbReference type="HAMAP-Rule" id="MF_00391"/>
    </source>
</evidence>
<evidence type="ECO:0000256" key="2">
    <source>
        <dbReference type="SAM" id="MobiDB-lite"/>
    </source>
</evidence>
<evidence type="ECO:0000305" key="3"/>
<protein>
    <recommendedName>
        <fullName evidence="1">Large ribosomal subunit protein bL34</fullName>
    </recommendedName>
    <alternativeName>
        <fullName evidence="3">50S ribosomal protein L34</fullName>
    </alternativeName>
</protein>
<keyword id="KW-1185">Reference proteome</keyword>
<keyword id="KW-0687">Ribonucleoprotein</keyword>
<keyword id="KW-0689">Ribosomal protein</keyword>
<sequence>MKRTYQPNRRKRSKVHGFRARMSTRNGRKVLARRRRKGRKVLSA</sequence>